<dbReference type="EC" id="2.7.4.22" evidence="1"/>
<dbReference type="EMBL" id="CP000608">
    <property type="protein sequence ID" value="ABO47443.1"/>
    <property type="molecule type" value="Genomic_DNA"/>
</dbReference>
<dbReference type="RefSeq" id="WP_003021612.1">
    <property type="nucleotide sequence ID" value="NC_009257.1"/>
</dbReference>
<dbReference type="SMR" id="A4IZU4"/>
<dbReference type="GeneID" id="75264271"/>
<dbReference type="KEGG" id="ftw:FTW_1767"/>
<dbReference type="HOGENOM" id="CLU_033861_0_0_6"/>
<dbReference type="UniPathway" id="UPA00159">
    <property type="reaction ID" value="UER00275"/>
</dbReference>
<dbReference type="GO" id="GO:0005737">
    <property type="term" value="C:cytoplasm"/>
    <property type="evidence" value="ECO:0007669"/>
    <property type="project" value="UniProtKB-SubCell"/>
</dbReference>
<dbReference type="GO" id="GO:0005524">
    <property type="term" value="F:ATP binding"/>
    <property type="evidence" value="ECO:0007669"/>
    <property type="project" value="UniProtKB-KW"/>
</dbReference>
<dbReference type="GO" id="GO:0033862">
    <property type="term" value="F:UMP kinase activity"/>
    <property type="evidence" value="ECO:0007669"/>
    <property type="project" value="UniProtKB-EC"/>
</dbReference>
<dbReference type="GO" id="GO:0044210">
    <property type="term" value="P:'de novo' CTP biosynthetic process"/>
    <property type="evidence" value="ECO:0007669"/>
    <property type="project" value="UniProtKB-UniRule"/>
</dbReference>
<dbReference type="GO" id="GO:0006225">
    <property type="term" value="P:UDP biosynthetic process"/>
    <property type="evidence" value="ECO:0007669"/>
    <property type="project" value="TreeGrafter"/>
</dbReference>
<dbReference type="CDD" id="cd04254">
    <property type="entry name" value="AAK_UMPK-PyrH-Ec"/>
    <property type="match status" value="1"/>
</dbReference>
<dbReference type="FunFam" id="3.40.1160.10:FF:000001">
    <property type="entry name" value="Uridylate kinase"/>
    <property type="match status" value="1"/>
</dbReference>
<dbReference type="Gene3D" id="3.40.1160.10">
    <property type="entry name" value="Acetylglutamate kinase-like"/>
    <property type="match status" value="1"/>
</dbReference>
<dbReference type="HAMAP" id="MF_01220_B">
    <property type="entry name" value="PyrH_B"/>
    <property type="match status" value="1"/>
</dbReference>
<dbReference type="InterPro" id="IPR036393">
    <property type="entry name" value="AceGlu_kinase-like_sf"/>
</dbReference>
<dbReference type="InterPro" id="IPR001048">
    <property type="entry name" value="Asp/Glu/Uridylate_kinase"/>
</dbReference>
<dbReference type="InterPro" id="IPR011817">
    <property type="entry name" value="Uridylate_kinase"/>
</dbReference>
<dbReference type="InterPro" id="IPR015963">
    <property type="entry name" value="Uridylate_kinase_bac"/>
</dbReference>
<dbReference type="NCBIfam" id="TIGR02075">
    <property type="entry name" value="pyrH_bact"/>
    <property type="match status" value="1"/>
</dbReference>
<dbReference type="PANTHER" id="PTHR42833">
    <property type="entry name" value="URIDYLATE KINASE"/>
    <property type="match status" value="1"/>
</dbReference>
<dbReference type="PANTHER" id="PTHR42833:SF4">
    <property type="entry name" value="URIDYLATE KINASE PUMPKIN, CHLOROPLASTIC"/>
    <property type="match status" value="1"/>
</dbReference>
<dbReference type="Pfam" id="PF00696">
    <property type="entry name" value="AA_kinase"/>
    <property type="match status" value="1"/>
</dbReference>
<dbReference type="PIRSF" id="PIRSF005650">
    <property type="entry name" value="Uridylate_kin"/>
    <property type="match status" value="1"/>
</dbReference>
<dbReference type="SUPFAM" id="SSF53633">
    <property type="entry name" value="Carbamate kinase-like"/>
    <property type="match status" value="1"/>
</dbReference>
<protein>
    <recommendedName>
        <fullName evidence="1">Uridylate kinase</fullName>
        <shortName evidence="1">UK</shortName>
        <ecNumber evidence="1">2.7.4.22</ecNumber>
    </recommendedName>
    <alternativeName>
        <fullName evidence="1">Uridine monophosphate kinase</fullName>
        <shortName evidence="1">UMP kinase</shortName>
        <shortName evidence="1">UMPK</shortName>
    </alternativeName>
</protein>
<name>PYRH_FRATW</name>
<feature type="chain" id="PRO_0000323854" description="Uridylate kinase">
    <location>
        <begin position="1"/>
        <end position="249"/>
    </location>
</feature>
<feature type="binding site" evidence="1">
    <location>
        <begin position="21"/>
        <end position="24"/>
    </location>
    <ligand>
        <name>ATP</name>
        <dbReference type="ChEBI" id="CHEBI:30616"/>
    </ligand>
</feature>
<feature type="binding site" evidence="1">
    <location>
        <position position="63"/>
    </location>
    <ligand>
        <name>UMP</name>
        <dbReference type="ChEBI" id="CHEBI:57865"/>
    </ligand>
</feature>
<feature type="binding site" evidence="1">
    <location>
        <position position="64"/>
    </location>
    <ligand>
        <name>ATP</name>
        <dbReference type="ChEBI" id="CHEBI:30616"/>
    </ligand>
</feature>
<feature type="binding site" evidence="1">
    <location>
        <position position="68"/>
    </location>
    <ligand>
        <name>ATP</name>
        <dbReference type="ChEBI" id="CHEBI:30616"/>
    </ligand>
</feature>
<feature type="binding site" evidence="1">
    <location>
        <position position="84"/>
    </location>
    <ligand>
        <name>UMP</name>
        <dbReference type="ChEBI" id="CHEBI:57865"/>
    </ligand>
</feature>
<feature type="binding site" evidence="1">
    <location>
        <begin position="145"/>
        <end position="152"/>
    </location>
    <ligand>
        <name>UMP</name>
        <dbReference type="ChEBI" id="CHEBI:57865"/>
    </ligand>
</feature>
<feature type="binding site" evidence="1">
    <location>
        <position position="172"/>
    </location>
    <ligand>
        <name>ATP</name>
        <dbReference type="ChEBI" id="CHEBI:30616"/>
    </ligand>
</feature>
<feature type="binding site" evidence="1">
    <location>
        <position position="178"/>
    </location>
    <ligand>
        <name>ATP</name>
        <dbReference type="ChEBI" id="CHEBI:30616"/>
    </ligand>
</feature>
<feature type="binding site" evidence="1">
    <location>
        <position position="181"/>
    </location>
    <ligand>
        <name>ATP</name>
        <dbReference type="ChEBI" id="CHEBI:30616"/>
    </ligand>
</feature>
<sequence length="249" mass="26659">MSNDSSECSQKLPKLKRILLKLSGESLSADQGFGINVESAQPIINQIKTLTNFGVELALVVGGGNILRGGRANFGNKIRRATADSMGMIATMINALALRDMLISEGVDAEVFSAKGVDGLLKVASAHEFNQELAKGRVLIFAGGTGNPFVTTDTTASLRAVEIGADALLKATTVNGVYDKDPNKYSDAKRFDKVTFSEVVSKELNVMDLGAFTQCRDFGIPIYVFDLTQPNALVDAVLDSKYGTWVTLD</sequence>
<organism>
    <name type="scientific">Francisella tularensis subsp. tularensis (strain WY96-3418)</name>
    <dbReference type="NCBI Taxonomy" id="418136"/>
    <lineage>
        <taxon>Bacteria</taxon>
        <taxon>Pseudomonadati</taxon>
        <taxon>Pseudomonadota</taxon>
        <taxon>Gammaproteobacteria</taxon>
        <taxon>Thiotrichales</taxon>
        <taxon>Francisellaceae</taxon>
        <taxon>Francisella</taxon>
    </lineage>
</organism>
<gene>
    <name evidence="1" type="primary">pyrH</name>
    <name type="ordered locus">FTW_1767</name>
</gene>
<evidence type="ECO:0000255" key="1">
    <source>
        <dbReference type="HAMAP-Rule" id="MF_01220"/>
    </source>
</evidence>
<accession>A4IZU4</accession>
<comment type="function">
    <text evidence="1">Catalyzes the reversible phosphorylation of UMP to UDP.</text>
</comment>
<comment type="catalytic activity">
    <reaction evidence="1">
        <text>UMP + ATP = UDP + ADP</text>
        <dbReference type="Rhea" id="RHEA:24400"/>
        <dbReference type="ChEBI" id="CHEBI:30616"/>
        <dbReference type="ChEBI" id="CHEBI:57865"/>
        <dbReference type="ChEBI" id="CHEBI:58223"/>
        <dbReference type="ChEBI" id="CHEBI:456216"/>
        <dbReference type="EC" id="2.7.4.22"/>
    </reaction>
</comment>
<comment type="activity regulation">
    <text evidence="1">Inhibited by UTP.</text>
</comment>
<comment type="pathway">
    <text evidence="1">Pyrimidine metabolism; CTP biosynthesis via de novo pathway; UDP from UMP (UMPK route): step 1/1.</text>
</comment>
<comment type="subunit">
    <text evidence="1">Homohexamer.</text>
</comment>
<comment type="subcellular location">
    <subcellularLocation>
        <location evidence="1">Cytoplasm</location>
    </subcellularLocation>
</comment>
<comment type="similarity">
    <text evidence="1">Belongs to the UMP kinase family.</text>
</comment>
<proteinExistence type="inferred from homology"/>
<reference key="1">
    <citation type="journal article" date="2007" name="PLoS ONE">
        <title>Complete genomic characterization of a pathogenic A.II strain of Francisella tularensis subspecies tularensis.</title>
        <authorList>
            <person name="Beckstrom-Sternberg S.M."/>
            <person name="Auerbach R.K."/>
            <person name="Godbole S."/>
            <person name="Pearson J.V."/>
            <person name="Beckstrom-Sternberg J.S."/>
            <person name="Deng Z."/>
            <person name="Munk C."/>
            <person name="Kubota K."/>
            <person name="Zhou Y."/>
            <person name="Bruce D."/>
            <person name="Noronha J."/>
            <person name="Scheuermann R.H."/>
            <person name="Wang A."/>
            <person name="Wei X."/>
            <person name="Wang J."/>
            <person name="Hao J."/>
            <person name="Wagner D.M."/>
            <person name="Brettin T.S."/>
            <person name="Brown N."/>
            <person name="Gilna P."/>
            <person name="Keim P.S."/>
        </authorList>
    </citation>
    <scope>NUCLEOTIDE SEQUENCE [LARGE SCALE GENOMIC DNA]</scope>
    <source>
        <strain>WY96-3418</strain>
    </source>
</reference>
<keyword id="KW-0067">ATP-binding</keyword>
<keyword id="KW-0963">Cytoplasm</keyword>
<keyword id="KW-0418">Kinase</keyword>
<keyword id="KW-0547">Nucleotide-binding</keyword>
<keyword id="KW-0665">Pyrimidine biosynthesis</keyword>
<keyword id="KW-0808">Transferase</keyword>